<organism>
    <name type="scientific">Haemophilus influenzae (strain ATCC 51907 / DSM 11121 / KW20 / Rd)</name>
    <dbReference type="NCBI Taxonomy" id="71421"/>
    <lineage>
        <taxon>Bacteria</taxon>
        <taxon>Pseudomonadati</taxon>
        <taxon>Pseudomonadota</taxon>
        <taxon>Gammaproteobacteria</taxon>
        <taxon>Pasteurellales</taxon>
        <taxon>Pasteurellaceae</taxon>
        <taxon>Haemophilus</taxon>
    </lineage>
</organism>
<name>DLDH_HAEIN</name>
<keyword id="KW-0963">Cytoplasm</keyword>
<keyword id="KW-1015">Disulfide bond</keyword>
<keyword id="KW-0274">FAD</keyword>
<keyword id="KW-0285">Flavoprotein</keyword>
<keyword id="KW-0520">NAD</keyword>
<keyword id="KW-0560">Oxidoreductase</keyword>
<keyword id="KW-0676">Redox-active center</keyword>
<keyword id="KW-1185">Reference proteome</keyword>
<proteinExistence type="inferred from homology"/>
<gene>
    <name type="primary">lpdA</name>
    <name type="ordered locus">HI_1231</name>
</gene>
<feature type="initiator methionine" description="Removed" evidence="1">
    <location>
        <position position="1"/>
    </location>
</feature>
<feature type="chain" id="PRO_0000068030" description="Dihydrolipoyl dehydrogenase">
    <location>
        <begin position="2"/>
        <end position="478"/>
    </location>
</feature>
<feature type="active site" description="Proton acceptor" evidence="1">
    <location>
        <position position="445"/>
    </location>
</feature>
<feature type="binding site" evidence="1">
    <location>
        <begin position="36"/>
        <end position="45"/>
    </location>
    <ligand>
        <name>FAD</name>
        <dbReference type="ChEBI" id="CHEBI:57692"/>
    </ligand>
</feature>
<feature type="binding site" evidence="1">
    <location>
        <position position="54"/>
    </location>
    <ligand>
        <name>FAD</name>
        <dbReference type="ChEBI" id="CHEBI:57692"/>
    </ligand>
</feature>
<feature type="binding site" evidence="1">
    <location>
        <position position="117"/>
    </location>
    <ligand>
        <name>FAD</name>
        <dbReference type="ChEBI" id="CHEBI:57692"/>
    </ligand>
</feature>
<feature type="binding site" evidence="1">
    <location>
        <begin position="183"/>
        <end position="187"/>
    </location>
    <ligand>
        <name>NAD(+)</name>
        <dbReference type="ChEBI" id="CHEBI:57540"/>
    </ligand>
</feature>
<feature type="binding site" evidence="1">
    <location>
        <position position="206"/>
    </location>
    <ligand>
        <name>NAD(+)</name>
        <dbReference type="ChEBI" id="CHEBI:57540"/>
    </ligand>
</feature>
<feature type="binding site" evidence="1">
    <location>
        <position position="239"/>
    </location>
    <ligand>
        <name>NAD(+)</name>
        <dbReference type="ChEBI" id="CHEBI:57540"/>
    </ligand>
</feature>
<feature type="binding site" evidence="1">
    <location>
        <begin position="270"/>
        <end position="273"/>
    </location>
    <ligand>
        <name>NAD(+)</name>
        <dbReference type="ChEBI" id="CHEBI:57540"/>
    </ligand>
</feature>
<feature type="binding site" evidence="1">
    <location>
        <position position="313"/>
    </location>
    <ligand>
        <name>FAD</name>
        <dbReference type="ChEBI" id="CHEBI:57692"/>
    </ligand>
</feature>
<feature type="binding site" evidence="1">
    <location>
        <position position="321"/>
    </location>
    <ligand>
        <name>FAD</name>
        <dbReference type="ChEBI" id="CHEBI:57692"/>
    </ligand>
</feature>
<feature type="disulfide bond" description="Redox-active" evidence="1">
    <location>
        <begin position="45"/>
        <end position="50"/>
    </location>
</feature>
<sequence length="478" mass="51154">MSKEIKTQVVVLGAGPAGYSAAFRCADLGLETVIVERYSTLGGVCLNVGCIPSKALLHVAKVIEEAKHANKNGIYFSEPRIELDEVRAGKEAVVAKLTGGLAGMAKARKVTVVEGLATFTDSHTLVARDRDGNPTTVKFDNAIIAAGSRPVQLPFIPHEDPRIWDSTDALKLKEVPKKLLIMGGGIIGLEMGTVYNALGSEVEVVEMFDQVIPAADKDVVGIYTKQVEKKFKLMLETKVTAVEAKDDGIYVSMEGKACNDTKRYDAVLVAIGRVPNGKLIDAGKAGVEVDDRGFIHVDKQMRTNVPHIYAIGDIVGQPMLAHKGVHEGHVAAEVIAGQKHYFDPKVIPSIAYTEPEVAWVGKTEKECKQEGLNYEVAKFPWAASGRAIASECSEGMTKLIFDKDTHRVLGGAIVGSNGGELLGEIGLAIEMGCDAEDIALTIHAHPTLHESVGLAAEVFEGSITDLPNAKAKEKIISI</sequence>
<evidence type="ECO:0000250" key="1"/>
<evidence type="ECO:0000305" key="2"/>
<reference key="1">
    <citation type="journal article" date="1995" name="Science">
        <title>Whole-genome random sequencing and assembly of Haemophilus influenzae Rd.</title>
        <authorList>
            <person name="Fleischmann R.D."/>
            <person name="Adams M.D."/>
            <person name="White O."/>
            <person name="Clayton R.A."/>
            <person name="Kirkness E.F."/>
            <person name="Kerlavage A.R."/>
            <person name="Bult C.J."/>
            <person name="Tomb J.-F."/>
            <person name="Dougherty B.A."/>
            <person name="Merrick J.M."/>
            <person name="McKenney K."/>
            <person name="Sutton G.G."/>
            <person name="FitzHugh W."/>
            <person name="Fields C.A."/>
            <person name="Gocayne J.D."/>
            <person name="Scott J.D."/>
            <person name="Shirley R."/>
            <person name="Liu L.-I."/>
            <person name="Glodek A."/>
            <person name="Kelley J.M."/>
            <person name="Weidman J.F."/>
            <person name="Phillips C.A."/>
            <person name="Spriggs T."/>
            <person name="Hedblom E."/>
            <person name="Cotton M.D."/>
            <person name="Utterback T.R."/>
            <person name="Hanna M.C."/>
            <person name="Nguyen D.T."/>
            <person name="Saudek D.M."/>
            <person name="Brandon R.C."/>
            <person name="Fine L.D."/>
            <person name="Fritchman J.L."/>
            <person name="Fuhrmann J.L."/>
            <person name="Geoghagen N.S.M."/>
            <person name="Gnehm C.L."/>
            <person name="McDonald L.A."/>
            <person name="Small K.V."/>
            <person name="Fraser C.M."/>
            <person name="Smith H.O."/>
            <person name="Venter J.C."/>
        </authorList>
    </citation>
    <scope>NUCLEOTIDE SEQUENCE [LARGE SCALE GENOMIC DNA]</scope>
    <source>
        <strain>ATCC 51907 / DSM 11121 / KW20 / Rd</strain>
    </source>
</reference>
<protein>
    <recommendedName>
        <fullName>Dihydrolipoyl dehydrogenase</fullName>
        <ecNumber>1.8.1.4</ecNumber>
    </recommendedName>
    <alternativeName>
        <fullName>Dihydrolipoamide dehydrogenase</fullName>
    </alternativeName>
    <alternativeName>
        <fullName>E3 component of pyruvate and 2-oxoglutarate dehydrogenases complexes</fullName>
    </alternativeName>
</protein>
<accession>P43784</accession>
<dbReference type="EC" id="1.8.1.4"/>
<dbReference type="EMBL" id="L42023">
    <property type="protein sequence ID" value="AAC22884.1"/>
    <property type="molecule type" value="Genomic_DNA"/>
</dbReference>
<dbReference type="PIR" id="H64111">
    <property type="entry name" value="H64111"/>
</dbReference>
<dbReference type="RefSeq" id="NP_439387.1">
    <property type="nucleotide sequence ID" value="NC_000907.1"/>
</dbReference>
<dbReference type="SMR" id="P43784"/>
<dbReference type="STRING" id="71421.HI_1231"/>
<dbReference type="EnsemblBacteria" id="AAC22884">
    <property type="protein sequence ID" value="AAC22884"/>
    <property type="gene ID" value="HI_1231"/>
</dbReference>
<dbReference type="KEGG" id="hin:HI_1231"/>
<dbReference type="PATRIC" id="fig|71421.8.peg.1283"/>
<dbReference type="eggNOG" id="COG1249">
    <property type="taxonomic scope" value="Bacteria"/>
</dbReference>
<dbReference type="HOGENOM" id="CLU_016755_0_1_6"/>
<dbReference type="OrthoDB" id="9800167at2"/>
<dbReference type="PhylomeDB" id="P43784"/>
<dbReference type="BioCyc" id="HINF71421:G1GJ1-1262-MONOMER"/>
<dbReference type="Proteomes" id="UP000000579">
    <property type="component" value="Chromosome"/>
</dbReference>
<dbReference type="GO" id="GO:0005737">
    <property type="term" value="C:cytoplasm"/>
    <property type="evidence" value="ECO:0007669"/>
    <property type="project" value="UniProtKB-SubCell"/>
</dbReference>
<dbReference type="GO" id="GO:0004148">
    <property type="term" value="F:dihydrolipoyl dehydrogenase (NADH) activity"/>
    <property type="evidence" value="ECO:0000318"/>
    <property type="project" value="GO_Central"/>
</dbReference>
<dbReference type="GO" id="GO:0050660">
    <property type="term" value="F:flavin adenine dinucleotide binding"/>
    <property type="evidence" value="ECO:0000318"/>
    <property type="project" value="GO_Central"/>
</dbReference>
<dbReference type="GO" id="GO:0006103">
    <property type="term" value="P:2-oxoglutarate metabolic process"/>
    <property type="evidence" value="ECO:0000318"/>
    <property type="project" value="GO_Central"/>
</dbReference>
<dbReference type="GO" id="GO:0006090">
    <property type="term" value="P:pyruvate metabolic process"/>
    <property type="evidence" value="ECO:0000318"/>
    <property type="project" value="GO_Central"/>
</dbReference>
<dbReference type="FunFam" id="3.30.390.30:FF:000001">
    <property type="entry name" value="Dihydrolipoyl dehydrogenase"/>
    <property type="match status" value="1"/>
</dbReference>
<dbReference type="Gene3D" id="3.30.390.30">
    <property type="match status" value="1"/>
</dbReference>
<dbReference type="Gene3D" id="3.50.50.60">
    <property type="entry name" value="FAD/NAD(P)-binding domain"/>
    <property type="match status" value="2"/>
</dbReference>
<dbReference type="InterPro" id="IPR050151">
    <property type="entry name" value="Class-I_Pyr_Nuc-Dis_Oxidored"/>
</dbReference>
<dbReference type="InterPro" id="IPR036188">
    <property type="entry name" value="FAD/NAD-bd_sf"/>
</dbReference>
<dbReference type="InterPro" id="IPR023753">
    <property type="entry name" value="FAD/NAD-binding_dom"/>
</dbReference>
<dbReference type="InterPro" id="IPR016156">
    <property type="entry name" value="FAD/NAD-linked_Rdtase_dimer_sf"/>
</dbReference>
<dbReference type="InterPro" id="IPR006258">
    <property type="entry name" value="Lipoamide_DH"/>
</dbReference>
<dbReference type="InterPro" id="IPR001100">
    <property type="entry name" value="Pyr_nuc-diS_OxRdtase"/>
</dbReference>
<dbReference type="InterPro" id="IPR004099">
    <property type="entry name" value="Pyr_nucl-diS_OxRdtase_dimer"/>
</dbReference>
<dbReference type="InterPro" id="IPR012999">
    <property type="entry name" value="Pyr_OxRdtase_I_AS"/>
</dbReference>
<dbReference type="NCBIfam" id="TIGR01350">
    <property type="entry name" value="lipoamide_DH"/>
    <property type="match status" value="1"/>
</dbReference>
<dbReference type="PANTHER" id="PTHR22912:SF160">
    <property type="entry name" value="DIHYDROLIPOYL DEHYDROGENASE"/>
    <property type="match status" value="1"/>
</dbReference>
<dbReference type="PANTHER" id="PTHR22912">
    <property type="entry name" value="DISULFIDE OXIDOREDUCTASE"/>
    <property type="match status" value="1"/>
</dbReference>
<dbReference type="Pfam" id="PF07992">
    <property type="entry name" value="Pyr_redox_2"/>
    <property type="match status" value="1"/>
</dbReference>
<dbReference type="Pfam" id="PF02852">
    <property type="entry name" value="Pyr_redox_dim"/>
    <property type="match status" value="1"/>
</dbReference>
<dbReference type="PIRSF" id="PIRSF000350">
    <property type="entry name" value="Mercury_reductase_MerA"/>
    <property type="match status" value="1"/>
</dbReference>
<dbReference type="PRINTS" id="PR00368">
    <property type="entry name" value="FADPNR"/>
</dbReference>
<dbReference type="PRINTS" id="PR00411">
    <property type="entry name" value="PNDRDTASEI"/>
</dbReference>
<dbReference type="SUPFAM" id="SSF51905">
    <property type="entry name" value="FAD/NAD(P)-binding domain"/>
    <property type="match status" value="1"/>
</dbReference>
<dbReference type="SUPFAM" id="SSF55424">
    <property type="entry name" value="FAD/NAD-linked reductases, dimerisation (C-terminal) domain"/>
    <property type="match status" value="1"/>
</dbReference>
<dbReference type="PROSITE" id="PS00076">
    <property type="entry name" value="PYRIDINE_REDOX_1"/>
    <property type="match status" value="1"/>
</dbReference>
<comment type="function">
    <text evidence="1">Lipoamide dehydrogenase is a component of the alpha-ketoacid dehydrogenase complexes.</text>
</comment>
<comment type="catalytic activity">
    <reaction>
        <text>N(6)-[(R)-dihydrolipoyl]-L-lysyl-[protein] + NAD(+) = N(6)-[(R)-lipoyl]-L-lysyl-[protein] + NADH + H(+)</text>
        <dbReference type="Rhea" id="RHEA:15045"/>
        <dbReference type="Rhea" id="RHEA-COMP:10474"/>
        <dbReference type="Rhea" id="RHEA-COMP:10475"/>
        <dbReference type="ChEBI" id="CHEBI:15378"/>
        <dbReference type="ChEBI" id="CHEBI:57540"/>
        <dbReference type="ChEBI" id="CHEBI:57945"/>
        <dbReference type="ChEBI" id="CHEBI:83099"/>
        <dbReference type="ChEBI" id="CHEBI:83100"/>
        <dbReference type="EC" id="1.8.1.4"/>
    </reaction>
</comment>
<comment type="cofactor">
    <cofactor evidence="1">
        <name>FAD</name>
        <dbReference type="ChEBI" id="CHEBI:57692"/>
    </cofactor>
    <text evidence="1">Binds 1 FAD per subunit.</text>
</comment>
<comment type="subunit">
    <text evidence="1">Homodimer.</text>
</comment>
<comment type="subcellular location">
    <subcellularLocation>
        <location>Cytoplasm</location>
    </subcellularLocation>
</comment>
<comment type="miscellaneous">
    <text>The active site is a redox-active disulfide bond.</text>
</comment>
<comment type="similarity">
    <text evidence="2">Belongs to the class-I pyridine nucleotide-disulfide oxidoreductase family.</text>
</comment>